<dbReference type="EMBL" id="CP000473">
    <property type="protein sequence ID" value="ABJ86077.1"/>
    <property type="molecule type" value="Genomic_DNA"/>
</dbReference>
<dbReference type="SMR" id="Q01W88"/>
<dbReference type="FunCoup" id="Q01W88">
    <property type="interactions" value="761"/>
</dbReference>
<dbReference type="STRING" id="234267.Acid_5122"/>
<dbReference type="KEGG" id="sus:Acid_5122"/>
<dbReference type="eggNOG" id="COG0049">
    <property type="taxonomic scope" value="Bacteria"/>
</dbReference>
<dbReference type="HOGENOM" id="CLU_072226_1_1_0"/>
<dbReference type="InParanoid" id="Q01W88"/>
<dbReference type="OrthoDB" id="9807653at2"/>
<dbReference type="GO" id="GO:0015935">
    <property type="term" value="C:small ribosomal subunit"/>
    <property type="evidence" value="ECO:0007669"/>
    <property type="project" value="InterPro"/>
</dbReference>
<dbReference type="GO" id="GO:0019843">
    <property type="term" value="F:rRNA binding"/>
    <property type="evidence" value="ECO:0007669"/>
    <property type="project" value="UniProtKB-UniRule"/>
</dbReference>
<dbReference type="GO" id="GO:0003735">
    <property type="term" value="F:structural constituent of ribosome"/>
    <property type="evidence" value="ECO:0007669"/>
    <property type="project" value="InterPro"/>
</dbReference>
<dbReference type="GO" id="GO:0000049">
    <property type="term" value="F:tRNA binding"/>
    <property type="evidence" value="ECO:0007669"/>
    <property type="project" value="UniProtKB-UniRule"/>
</dbReference>
<dbReference type="GO" id="GO:0006412">
    <property type="term" value="P:translation"/>
    <property type="evidence" value="ECO:0007669"/>
    <property type="project" value="UniProtKB-UniRule"/>
</dbReference>
<dbReference type="CDD" id="cd14869">
    <property type="entry name" value="uS7_Bacteria"/>
    <property type="match status" value="1"/>
</dbReference>
<dbReference type="FunFam" id="1.10.455.10:FF:000001">
    <property type="entry name" value="30S ribosomal protein S7"/>
    <property type="match status" value="1"/>
</dbReference>
<dbReference type="Gene3D" id="1.10.455.10">
    <property type="entry name" value="Ribosomal protein S7 domain"/>
    <property type="match status" value="1"/>
</dbReference>
<dbReference type="HAMAP" id="MF_00480_B">
    <property type="entry name" value="Ribosomal_uS7_B"/>
    <property type="match status" value="1"/>
</dbReference>
<dbReference type="InterPro" id="IPR000235">
    <property type="entry name" value="Ribosomal_uS7"/>
</dbReference>
<dbReference type="InterPro" id="IPR005717">
    <property type="entry name" value="Ribosomal_uS7_bac/org-type"/>
</dbReference>
<dbReference type="InterPro" id="IPR020606">
    <property type="entry name" value="Ribosomal_uS7_CS"/>
</dbReference>
<dbReference type="InterPro" id="IPR023798">
    <property type="entry name" value="Ribosomal_uS7_dom"/>
</dbReference>
<dbReference type="InterPro" id="IPR036823">
    <property type="entry name" value="Ribosomal_uS7_dom_sf"/>
</dbReference>
<dbReference type="NCBIfam" id="TIGR01029">
    <property type="entry name" value="rpsG_bact"/>
    <property type="match status" value="1"/>
</dbReference>
<dbReference type="PANTHER" id="PTHR11205">
    <property type="entry name" value="RIBOSOMAL PROTEIN S7"/>
    <property type="match status" value="1"/>
</dbReference>
<dbReference type="Pfam" id="PF00177">
    <property type="entry name" value="Ribosomal_S7"/>
    <property type="match status" value="1"/>
</dbReference>
<dbReference type="PIRSF" id="PIRSF002122">
    <property type="entry name" value="RPS7p_RPS7a_RPS5e_RPS7o"/>
    <property type="match status" value="1"/>
</dbReference>
<dbReference type="SUPFAM" id="SSF47973">
    <property type="entry name" value="Ribosomal protein S7"/>
    <property type="match status" value="1"/>
</dbReference>
<dbReference type="PROSITE" id="PS00052">
    <property type="entry name" value="RIBOSOMAL_S7"/>
    <property type="match status" value="1"/>
</dbReference>
<proteinExistence type="inferred from homology"/>
<organism>
    <name type="scientific">Solibacter usitatus (strain Ellin6076)</name>
    <dbReference type="NCBI Taxonomy" id="234267"/>
    <lineage>
        <taxon>Bacteria</taxon>
        <taxon>Pseudomonadati</taxon>
        <taxon>Acidobacteriota</taxon>
        <taxon>Terriglobia</taxon>
        <taxon>Bryobacterales</taxon>
        <taxon>Solibacteraceae</taxon>
        <taxon>Candidatus Solibacter</taxon>
    </lineage>
</organism>
<sequence>MPRRRRAVIREVAPDAIYNSTLVEKFVNSMMWQGKKNTAQGIFYDAMDKIRERTSDDPLKAFKKAVENAKPLLEVKTRRVGGANYQVPIEVPQNRRTSLAMRWIITNARTRPEKGMAEKLANELNDAANLRGGAIKKRDDVHRMAEANKAFAHYRW</sequence>
<reference key="1">
    <citation type="journal article" date="2009" name="Appl. Environ. Microbiol.">
        <title>Three genomes from the phylum Acidobacteria provide insight into the lifestyles of these microorganisms in soils.</title>
        <authorList>
            <person name="Ward N.L."/>
            <person name="Challacombe J.F."/>
            <person name="Janssen P.H."/>
            <person name="Henrissat B."/>
            <person name="Coutinho P.M."/>
            <person name="Wu M."/>
            <person name="Xie G."/>
            <person name="Haft D.H."/>
            <person name="Sait M."/>
            <person name="Badger J."/>
            <person name="Barabote R.D."/>
            <person name="Bradley B."/>
            <person name="Brettin T.S."/>
            <person name="Brinkac L.M."/>
            <person name="Bruce D."/>
            <person name="Creasy T."/>
            <person name="Daugherty S.C."/>
            <person name="Davidsen T.M."/>
            <person name="DeBoy R.T."/>
            <person name="Detter J.C."/>
            <person name="Dodson R.J."/>
            <person name="Durkin A.S."/>
            <person name="Ganapathy A."/>
            <person name="Gwinn-Giglio M."/>
            <person name="Han C.S."/>
            <person name="Khouri H."/>
            <person name="Kiss H."/>
            <person name="Kothari S.P."/>
            <person name="Madupu R."/>
            <person name="Nelson K.E."/>
            <person name="Nelson W.C."/>
            <person name="Paulsen I."/>
            <person name="Penn K."/>
            <person name="Ren Q."/>
            <person name="Rosovitz M.J."/>
            <person name="Selengut J.D."/>
            <person name="Shrivastava S."/>
            <person name="Sullivan S.A."/>
            <person name="Tapia R."/>
            <person name="Thompson L.S."/>
            <person name="Watkins K.L."/>
            <person name="Yang Q."/>
            <person name="Yu C."/>
            <person name="Zafar N."/>
            <person name="Zhou L."/>
            <person name="Kuske C.R."/>
        </authorList>
    </citation>
    <scope>NUCLEOTIDE SEQUENCE [LARGE SCALE GENOMIC DNA]</scope>
    <source>
        <strain>Ellin6076</strain>
    </source>
</reference>
<protein>
    <recommendedName>
        <fullName evidence="1">Small ribosomal subunit protein uS7</fullName>
    </recommendedName>
    <alternativeName>
        <fullName evidence="2">30S ribosomal protein S7</fullName>
    </alternativeName>
</protein>
<name>RS7_SOLUE</name>
<comment type="function">
    <text evidence="1">One of the primary rRNA binding proteins, it binds directly to 16S rRNA where it nucleates assembly of the head domain of the 30S subunit. Is located at the subunit interface close to the decoding center, probably blocks exit of the E-site tRNA.</text>
</comment>
<comment type="subunit">
    <text evidence="1">Part of the 30S ribosomal subunit. Contacts proteins S9 and S11.</text>
</comment>
<comment type="similarity">
    <text evidence="1">Belongs to the universal ribosomal protein uS7 family.</text>
</comment>
<gene>
    <name evidence="1" type="primary">rpsG</name>
    <name type="ordered locus">Acid_5122</name>
</gene>
<accession>Q01W88</accession>
<evidence type="ECO:0000255" key="1">
    <source>
        <dbReference type="HAMAP-Rule" id="MF_00480"/>
    </source>
</evidence>
<evidence type="ECO:0000305" key="2"/>
<keyword id="KW-0687">Ribonucleoprotein</keyword>
<keyword id="KW-0689">Ribosomal protein</keyword>
<keyword id="KW-0694">RNA-binding</keyword>
<keyword id="KW-0699">rRNA-binding</keyword>
<keyword id="KW-0820">tRNA-binding</keyword>
<feature type="chain" id="PRO_1000014294" description="Small ribosomal subunit protein uS7">
    <location>
        <begin position="1"/>
        <end position="156"/>
    </location>
</feature>